<sequence>MSRLAKKPIVLPQGVTVEIKDNVVKVKGPKGELSQEFLPYVKIEVEGNEVWVRPNENQIIRKSDWRKIKMFQGTYWSLIRNMVVGVTEGYKKELEIVGIGYRAQLQGNTVVMNLGYAHPVVYEIPSDVKIEVPAPNRIVVSGIDKQRVGQVAAEIRAFRPPNVYTGKGIRYVGEVVRQKEGKKA</sequence>
<dbReference type="EMBL" id="CP000969">
    <property type="protein sequence ID" value="ACB09723.1"/>
    <property type="molecule type" value="Genomic_DNA"/>
</dbReference>
<dbReference type="RefSeq" id="WP_011943793.1">
    <property type="nucleotide sequence ID" value="NC_010483.1"/>
</dbReference>
<dbReference type="SMR" id="B1LBM5"/>
<dbReference type="KEGG" id="trq:TRQ2_1379"/>
<dbReference type="HOGENOM" id="CLU_065464_1_2_0"/>
<dbReference type="Proteomes" id="UP000001687">
    <property type="component" value="Chromosome"/>
</dbReference>
<dbReference type="GO" id="GO:0022625">
    <property type="term" value="C:cytosolic large ribosomal subunit"/>
    <property type="evidence" value="ECO:0007669"/>
    <property type="project" value="TreeGrafter"/>
</dbReference>
<dbReference type="GO" id="GO:0019843">
    <property type="term" value="F:rRNA binding"/>
    <property type="evidence" value="ECO:0007669"/>
    <property type="project" value="UniProtKB-UniRule"/>
</dbReference>
<dbReference type="GO" id="GO:0003735">
    <property type="term" value="F:structural constituent of ribosome"/>
    <property type="evidence" value="ECO:0007669"/>
    <property type="project" value="InterPro"/>
</dbReference>
<dbReference type="GO" id="GO:0002181">
    <property type="term" value="P:cytoplasmic translation"/>
    <property type="evidence" value="ECO:0007669"/>
    <property type="project" value="TreeGrafter"/>
</dbReference>
<dbReference type="FunFam" id="3.90.930.12:FF:000001">
    <property type="entry name" value="50S ribosomal protein L6"/>
    <property type="match status" value="1"/>
</dbReference>
<dbReference type="FunFam" id="3.90.930.12:FF:000002">
    <property type="entry name" value="50S ribosomal protein L6"/>
    <property type="match status" value="1"/>
</dbReference>
<dbReference type="Gene3D" id="3.90.930.12">
    <property type="entry name" value="Ribosomal protein L6, alpha-beta domain"/>
    <property type="match status" value="2"/>
</dbReference>
<dbReference type="HAMAP" id="MF_01365_B">
    <property type="entry name" value="Ribosomal_uL6_B"/>
    <property type="match status" value="1"/>
</dbReference>
<dbReference type="InterPro" id="IPR000702">
    <property type="entry name" value="Ribosomal_uL6-like"/>
</dbReference>
<dbReference type="InterPro" id="IPR036789">
    <property type="entry name" value="Ribosomal_uL6-like_a/b-dom_sf"/>
</dbReference>
<dbReference type="InterPro" id="IPR020040">
    <property type="entry name" value="Ribosomal_uL6_a/b-dom"/>
</dbReference>
<dbReference type="InterPro" id="IPR019906">
    <property type="entry name" value="Ribosomal_uL6_bac-type"/>
</dbReference>
<dbReference type="NCBIfam" id="TIGR03654">
    <property type="entry name" value="L6_bact"/>
    <property type="match status" value="1"/>
</dbReference>
<dbReference type="PANTHER" id="PTHR11655">
    <property type="entry name" value="60S/50S RIBOSOMAL PROTEIN L6/L9"/>
    <property type="match status" value="1"/>
</dbReference>
<dbReference type="PANTHER" id="PTHR11655:SF14">
    <property type="entry name" value="LARGE RIBOSOMAL SUBUNIT PROTEIN UL6M"/>
    <property type="match status" value="1"/>
</dbReference>
<dbReference type="Pfam" id="PF00347">
    <property type="entry name" value="Ribosomal_L6"/>
    <property type="match status" value="2"/>
</dbReference>
<dbReference type="PIRSF" id="PIRSF002162">
    <property type="entry name" value="Ribosomal_L6"/>
    <property type="match status" value="1"/>
</dbReference>
<dbReference type="PRINTS" id="PR00059">
    <property type="entry name" value="RIBOSOMALL6"/>
</dbReference>
<dbReference type="SUPFAM" id="SSF56053">
    <property type="entry name" value="Ribosomal protein L6"/>
    <property type="match status" value="2"/>
</dbReference>
<keyword id="KW-0687">Ribonucleoprotein</keyword>
<keyword id="KW-0689">Ribosomal protein</keyword>
<keyword id="KW-0694">RNA-binding</keyword>
<keyword id="KW-0699">rRNA-binding</keyword>
<name>RL6_THESQ</name>
<reference key="1">
    <citation type="journal article" date="2011" name="J. Bacteriol.">
        <title>Genome sequence of Thermotoga sp. strain RQ2, a hyperthermophilic bacterium isolated from a geothermally heated region of the seafloor near Ribeira Quente, the Azores.</title>
        <authorList>
            <person name="Swithers K.S."/>
            <person name="DiPippo J.L."/>
            <person name="Bruce D.C."/>
            <person name="Detter C."/>
            <person name="Tapia R."/>
            <person name="Han S."/>
            <person name="Saunders E."/>
            <person name="Goodwin L.A."/>
            <person name="Han J."/>
            <person name="Woyke T."/>
            <person name="Pitluck S."/>
            <person name="Pennacchio L."/>
            <person name="Nolan M."/>
            <person name="Mikhailova N."/>
            <person name="Lykidis A."/>
            <person name="Land M.L."/>
            <person name="Brettin T."/>
            <person name="Stetter K.O."/>
            <person name="Nelson K.E."/>
            <person name="Gogarten J.P."/>
            <person name="Noll K.M."/>
        </authorList>
    </citation>
    <scope>NUCLEOTIDE SEQUENCE [LARGE SCALE GENOMIC DNA]</scope>
    <source>
        <strain>RQ2</strain>
    </source>
</reference>
<protein>
    <recommendedName>
        <fullName evidence="1">Large ribosomal subunit protein uL6</fullName>
    </recommendedName>
    <alternativeName>
        <fullName evidence="2">50S ribosomal protein L6</fullName>
    </alternativeName>
</protein>
<proteinExistence type="inferred from homology"/>
<evidence type="ECO:0000255" key="1">
    <source>
        <dbReference type="HAMAP-Rule" id="MF_01365"/>
    </source>
</evidence>
<evidence type="ECO:0000305" key="2"/>
<gene>
    <name evidence="1" type="primary">rplF</name>
    <name type="ordered locus">TRQ2_1379</name>
</gene>
<accession>B1LBM5</accession>
<organism>
    <name type="scientific">Thermotoga sp. (strain RQ2)</name>
    <dbReference type="NCBI Taxonomy" id="126740"/>
    <lineage>
        <taxon>Bacteria</taxon>
        <taxon>Thermotogati</taxon>
        <taxon>Thermotogota</taxon>
        <taxon>Thermotogae</taxon>
        <taxon>Thermotogales</taxon>
        <taxon>Thermotogaceae</taxon>
        <taxon>Thermotoga</taxon>
    </lineage>
</organism>
<comment type="function">
    <text evidence="1">This protein binds to the 23S rRNA, and is important in its secondary structure. It is located near the subunit interface in the base of the L7/L12 stalk, and near the tRNA binding site of the peptidyltransferase center.</text>
</comment>
<comment type="subunit">
    <text evidence="1">Part of the 50S ribosomal subunit.</text>
</comment>
<comment type="similarity">
    <text evidence="1">Belongs to the universal ribosomal protein uL6 family.</text>
</comment>
<feature type="chain" id="PRO_1000144064" description="Large ribosomal subunit protein uL6">
    <location>
        <begin position="1"/>
        <end position="184"/>
    </location>
</feature>